<reference key="1">
    <citation type="journal article" date="2007" name="PLoS Genet.">
        <title>The complete genome sequence of Yersinia pseudotuberculosis IP31758, the causative agent of Far East scarlet-like fever.</title>
        <authorList>
            <person name="Eppinger M."/>
            <person name="Rosovitz M.J."/>
            <person name="Fricke W.F."/>
            <person name="Rasko D.A."/>
            <person name="Kokorina G."/>
            <person name="Fayolle C."/>
            <person name="Lindler L.E."/>
            <person name="Carniel E."/>
            <person name="Ravel J."/>
        </authorList>
    </citation>
    <scope>NUCLEOTIDE SEQUENCE [LARGE SCALE GENOMIC DNA]</scope>
    <source>
        <strain>IP 31758</strain>
    </source>
</reference>
<keyword id="KW-0963">Cytoplasm</keyword>
<keyword id="KW-0620">Polyamine biosynthesis</keyword>
<keyword id="KW-0745">Spermidine biosynthesis</keyword>
<keyword id="KW-0808">Transferase</keyword>
<sequence length="296" mass="33182">MSQKELWYETLHANFGQYFSVENVLYREKTEHQDLVIFENPELGRVMALDGVVQTTERDEFIYHEMMTHVPLLAHGQAKKVLIIGGGDGAMLREVSRHKNIEQITMVEIDAGVVEFCRQYLPNHSAGAYDDPRFKLVIDDGVNFVNQTTEKFDVIISDCTDPIGPGESLFTSVFYEGCARSLNEGGIFVAQNGVCFLQQDEAVNSHNKLSHYFSDVSFYQAAIPTYYGGIMTFAWATQNPALRQLDLATLQNRFAQAGLACRYYNPAIHVGSFALPQYLLDALTTIPKVIGVDSSE</sequence>
<dbReference type="EC" id="2.5.1.16" evidence="1"/>
<dbReference type="EMBL" id="CP000720">
    <property type="protein sequence ID" value="ABS48939.1"/>
    <property type="molecule type" value="Genomic_DNA"/>
</dbReference>
<dbReference type="RefSeq" id="WP_011191746.1">
    <property type="nucleotide sequence ID" value="NC_009708.1"/>
</dbReference>
<dbReference type="SMR" id="A7FM33"/>
<dbReference type="GeneID" id="49787275"/>
<dbReference type="KEGG" id="ypi:YpsIP31758_3354"/>
<dbReference type="HOGENOM" id="CLU_048199_1_0_6"/>
<dbReference type="UniPathway" id="UPA00248">
    <property type="reaction ID" value="UER00314"/>
</dbReference>
<dbReference type="Proteomes" id="UP000002412">
    <property type="component" value="Chromosome"/>
</dbReference>
<dbReference type="GO" id="GO:0005829">
    <property type="term" value="C:cytosol"/>
    <property type="evidence" value="ECO:0007669"/>
    <property type="project" value="TreeGrafter"/>
</dbReference>
<dbReference type="GO" id="GO:0004766">
    <property type="term" value="F:spermidine synthase activity"/>
    <property type="evidence" value="ECO:0007669"/>
    <property type="project" value="UniProtKB-UniRule"/>
</dbReference>
<dbReference type="GO" id="GO:0008295">
    <property type="term" value="P:spermidine biosynthetic process"/>
    <property type="evidence" value="ECO:0007669"/>
    <property type="project" value="UniProtKB-UniRule"/>
</dbReference>
<dbReference type="CDD" id="cd02440">
    <property type="entry name" value="AdoMet_MTases"/>
    <property type="match status" value="1"/>
</dbReference>
<dbReference type="FunFam" id="2.30.140.10:FF:000002">
    <property type="entry name" value="Polyamine aminopropyltransferase"/>
    <property type="match status" value="1"/>
</dbReference>
<dbReference type="FunFam" id="3.40.50.150:FF:000026">
    <property type="entry name" value="Polyamine aminopropyltransferase"/>
    <property type="match status" value="1"/>
</dbReference>
<dbReference type="Gene3D" id="2.30.140.10">
    <property type="entry name" value="Spermidine synthase, tetramerisation domain"/>
    <property type="match status" value="1"/>
</dbReference>
<dbReference type="Gene3D" id="3.40.50.150">
    <property type="entry name" value="Vaccinia Virus protein VP39"/>
    <property type="match status" value="1"/>
</dbReference>
<dbReference type="HAMAP" id="MF_00198">
    <property type="entry name" value="Spermidine_synth"/>
    <property type="match status" value="1"/>
</dbReference>
<dbReference type="InterPro" id="IPR030374">
    <property type="entry name" value="PABS"/>
</dbReference>
<dbReference type="InterPro" id="IPR030373">
    <property type="entry name" value="PABS_CS"/>
</dbReference>
<dbReference type="InterPro" id="IPR029063">
    <property type="entry name" value="SAM-dependent_MTases_sf"/>
</dbReference>
<dbReference type="InterPro" id="IPR001045">
    <property type="entry name" value="Spermi_synthase"/>
</dbReference>
<dbReference type="InterPro" id="IPR035246">
    <property type="entry name" value="Spermidine_synt_N"/>
</dbReference>
<dbReference type="InterPro" id="IPR037163">
    <property type="entry name" value="Spermidine_synt_N_sf"/>
</dbReference>
<dbReference type="NCBIfam" id="NF037959">
    <property type="entry name" value="MFS_SpdSyn"/>
    <property type="match status" value="1"/>
</dbReference>
<dbReference type="NCBIfam" id="NF002010">
    <property type="entry name" value="PRK00811.1"/>
    <property type="match status" value="1"/>
</dbReference>
<dbReference type="NCBIfam" id="TIGR00417">
    <property type="entry name" value="speE"/>
    <property type="match status" value="1"/>
</dbReference>
<dbReference type="PANTHER" id="PTHR11558:SF11">
    <property type="entry name" value="SPERMIDINE SYNTHASE"/>
    <property type="match status" value="1"/>
</dbReference>
<dbReference type="PANTHER" id="PTHR11558">
    <property type="entry name" value="SPERMIDINE/SPERMINE SYNTHASE"/>
    <property type="match status" value="1"/>
</dbReference>
<dbReference type="Pfam" id="PF17284">
    <property type="entry name" value="Spermine_synt_N"/>
    <property type="match status" value="1"/>
</dbReference>
<dbReference type="Pfam" id="PF01564">
    <property type="entry name" value="Spermine_synth"/>
    <property type="match status" value="1"/>
</dbReference>
<dbReference type="SUPFAM" id="SSF53335">
    <property type="entry name" value="S-adenosyl-L-methionine-dependent methyltransferases"/>
    <property type="match status" value="1"/>
</dbReference>
<dbReference type="PROSITE" id="PS01330">
    <property type="entry name" value="PABS_1"/>
    <property type="match status" value="1"/>
</dbReference>
<dbReference type="PROSITE" id="PS51006">
    <property type="entry name" value="PABS_2"/>
    <property type="match status" value="1"/>
</dbReference>
<feature type="chain" id="PRO_1000058555" description="Polyamine aminopropyltransferase">
    <location>
        <begin position="1"/>
        <end position="296"/>
    </location>
</feature>
<feature type="domain" description="PABS" evidence="1">
    <location>
        <begin position="5"/>
        <end position="238"/>
    </location>
</feature>
<feature type="active site" description="Proton acceptor" evidence="1">
    <location>
        <position position="158"/>
    </location>
</feature>
<feature type="binding site" evidence="1">
    <location>
        <position position="33"/>
    </location>
    <ligand>
        <name>S-methyl-5'-thioadenosine</name>
        <dbReference type="ChEBI" id="CHEBI:17509"/>
    </ligand>
</feature>
<feature type="binding site" evidence="1">
    <location>
        <position position="64"/>
    </location>
    <ligand>
        <name>spermidine</name>
        <dbReference type="ChEBI" id="CHEBI:57834"/>
    </ligand>
</feature>
<feature type="binding site" evidence="1">
    <location>
        <position position="88"/>
    </location>
    <ligand>
        <name>spermidine</name>
        <dbReference type="ChEBI" id="CHEBI:57834"/>
    </ligand>
</feature>
<feature type="binding site" evidence="1">
    <location>
        <position position="108"/>
    </location>
    <ligand>
        <name>S-methyl-5'-thioadenosine</name>
        <dbReference type="ChEBI" id="CHEBI:17509"/>
    </ligand>
</feature>
<feature type="binding site" evidence="1">
    <location>
        <begin position="140"/>
        <end position="141"/>
    </location>
    <ligand>
        <name>S-methyl-5'-thioadenosine</name>
        <dbReference type="ChEBI" id="CHEBI:17509"/>
    </ligand>
</feature>
<feature type="binding site" evidence="1">
    <location>
        <begin position="158"/>
        <end position="161"/>
    </location>
    <ligand>
        <name>spermidine</name>
        <dbReference type="ChEBI" id="CHEBI:57834"/>
    </ligand>
</feature>
<feature type="binding site" evidence="1">
    <location>
        <position position="165"/>
    </location>
    <ligand>
        <name>S-methyl-5'-thioadenosine</name>
        <dbReference type="ChEBI" id="CHEBI:17509"/>
    </ligand>
</feature>
<proteinExistence type="inferred from homology"/>
<gene>
    <name evidence="1" type="primary">speE</name>
    <name type="ordered locus">YpsIP31758_3354</name>
</gene>
<evidence type="ECO:0000255" key="1">
    <source>
        <dbReference type="HAMAP-Rule" id="MF_00198"/>
    </source>
</evidence>
<protein>
    <recommendedName>
        <fullName evidence="1">Polyamine aminopropyltransferase</fullName>
    </recommendedName>
    <alternativeName>
        <fullName evidence="1">Putrescine aminopropyltransferase</fullName>
        <shortName evidence="1">PAPT</shortName>
    </alternativeName>
    <alternativeName>
        <fullName evidence="1">Spermidine synthase</fullName>
        <shortName evidence="1">SPDS</shortName>
        <shortName evidence="1">SPDSY</shortName>
        <ecNumber evidence="1">2.5.1.16</ecNumber>
    </alternativeName>
</protein>
<comment type="function">
    <text evidence="1">Catalyzes the irreversible transfer of a propylamine group from the amino donor S-adenosylmethioninamine (decarboxy-AdoMet) to putrescine (1,4-diaminobutane) to yield spermidine.</text>
</comment>
<comment type="catalytic activity">
    <reaction evidence="1">
        <text>S-adenosyl 3-(methylsulfanyl)propylamine + putrescine = S-methyl-5'-thioadenosine + spermidine + H(+)</text>
        <dbReference type="Rhea" id="RHEA:12721"/>
        <dbReference type="ChEBI" id="CHEBI:15378"/>
        <dbReference type="ChEBI" id="CHEBI:17509"/>
        <dbReference type="ChEBI" id="CHEBI:57443"/>
        <dbReference type="ChEBI" id="CHEBI:57834"/>
        <dbReference type="ChEBI" id="CHEBI:326268"/>
        <dbReference type="EC" id="2.5.1.16"/>
    </reaction>
</comment>
<comment type="pathway">
    <text evidence="1">Amine and polyamine biosynthesis; spermidine biosynthesis; spermidine from putrescine: step 1/1.</text>
</comment>
<comment type="subunit">
    <text evidence="1">Homodimer or homotetramer.</text>
</comment>
<comment type="subcellular location">
    <subcellularLocation>
        <location evidence="1">Cytoplasm</location>
    </subcellularLocation>
</comment>
<comment type="similarity">
    <text evidence="1">Belongs to the spermidine/spermine synthase family.</text>
</comment>
<organism>
    <name type="scientific">Yersinia pseudotuberculosis serotype O:1b (strain IP 31758)</name>
    <dbReference type="NCBI Taxonomy" id="349747"/>
    <lineage>
        <taxon>Bacteria</taxon>
        <taxon>Pseudomonadati</taxon>
        <taxon>Pseudomonadota</taxon>
        <taxon>Gammaproteobacteria</taxon>
        <taxon>Enterobacterales</taxon>
        <taxon>Yersiniaceae</taxon>
        <taxon>Yersinia</taxon>
    </lineage>
</organism>
<accession>A7FM33</accession>
<name>SPEE_YERP3</name>